<sequence>MLKPLGDRVVIEQVETEEKTASGIVLPDTAKEKPQEGRVVAVGTGRVTENGEKIALEVKEGDSVIFSKYAGTEVKYDGKEYLILRESDILAIIG</sequence>
<evidence type="ECO:0000255" key="1">
    <source>
        <dbReference type="HAMAP-Rule" id="MF_00580"/>
    </source>
</evidence>
<evidence type="ECO:0000305" key="2"/>
<accession>O50304</accession>
<keyword id="KW-0143">Chaperone</keyword>
<keyword id="KW-0963">Cytoplasm</keyword>
<keyword id="KW-1185">Reference proteome</keyword>
<keyword id="KW-0346">Stress response</keyword>
<protein>
    <recommendedName>
        <fullName evidence="1">Co-chaperonin GroES</fullName>
    </recommendedName>
    <alternativeName>
        <fullName evidence="1">10 kDa chaperonin</fullName>
    </alternativeName>
    <alternativeName>
        <fullName evidence="1">Chaperonin-10</fullName>
        <shortName evidence="1">Cpn10</shortName>
    </alternativeName>
</protein>
<organism>
    <name type="scientific">Halalkalibacterium halodurans (strain ATCC BAA-125 / DSM 18197 / FERM 7344 / JCM 9153 / C-125)</name>
    <name type="common">Bacillus halodurans</name>
    <dbReference type="NCBI Taxonomy" id="272558"/>
    <lineage>
        <taxon>Bacteria</taxon>
        <taxon>Bacillati</taxon>
        <taxon>Bacillota</taxon>
        <taxon>Bacilli</taxon>
        <taxon>Bacillales</taxon>
        <taxon>Bacillaceae</taxon>
        <taxon>Halalkalibacterium (ex Joshi et al. 2022)</taxon>
    </lineage>
</organism>
<comment type="function">
    <text evidence="1">Together with the chaperonin GroEL, plays an essential role in assisting protein folding. The GroEL-GroES system forms a nano-cage that allows encapsulation of the non-native substrate proteins and provides a physical environment optimized to promote and accelerate protein folding. GroES binds to the apical surface of the GroEL ring, thereby capping the opening of the GroEL channel.</text>
</comment>
<comment type="subunit">
    <text evidence="1">Heptamer of 7 subunits arranged in a ring. Interacts with the chaperonin GroEL.</text>
</comment>
<comment type="subcellular location">
    <subcellularLocation>
        <location evidence="1">Cytoplasm</location>
    </subcellularLocation>
</comment>
<comment type="induction">
    <text>By heat shock.</text>
</comment>
<comment type="similarity">
    <text evidence="1 2">Belongs to the GroES chaperonin family.</text>
</comment>
<reference key="1">
    <citation type="journal article" date="2000" name="Nucleic Acids Res.">
        <title>Complete genome sequence of the alkaliphilic bacterium Bacillus halodurans and genomic sequence comparison with Bacillus subtilis.</title>
        <authorList>
            <person name="Takami H."/>
            <person name="Nakasone K."/>
            <person name="Takaki Y."/>
            <person name="Maeno G."/>
            <person name="Sasaki R."/>
            <person name="Masui N."/>
            <person name="Fuji F."/>
            <person name="Hirama C."/>
            <person name="Nakamura Y."/>
            <person name="Ogasawara N."/>
            <person name="Kuhara S."/>
            <person name="Horikoshi K."/>
        </authorList>
    </citation>
    <scope>NUCLEOTIDE SEQUENCE [LARGE SCALE GENOMIC DNA]</scope>
    <source>
        <strain>ATCC BAA-125 / DSM 18197 / FERM 7344 / JCM 9153 / C-125</strain>
    </source>
</reference>
<reference key="2">
    <citation type="journal article" date="1996" name="Biosci. Biotechnol. Biochem.">
        <title>Molecular cloning and nucleotide sequence of the groEL gene from the alkaliphilic Bacillus sp. strain C-125 and reactivation of thermally inactivated alpha-glucosidase by recombinant GroEL.</title>
        <authorList>
            <person name="Xu Y."/>
            <person name="Kobayashi T."/>
            <person name="Kudo T."/>
        </authorList>
    </citation>
    <scope>NUCLEOTIDE SEQUENCE [GENOMIC DNA] OF 7-94</scope>
    <source>
        <strain>ATCC BAA-125 / DSM 18197 / FERM 7344 / JCM 9153 / C-125</strain>
    </source>
</reference>
<gene>
    <name evidence="1" type="primary">groES</name>
    <name evidence="1" type="synonym">groS</name>
    <name type="synonym">mopB</name>
    <name type="ordered locus">BH0561</name>
</gene>
<proteinExistence type="evidence at transcript level"/>
<name>CH10_HALH5</name>
<feature type="chain" id="PRO_0000174693" description="Co-chaperonin GroES">
    <location>
        <begin position="1"/>
        <end position="94"/>
    </location>
</feature>
<dbReference type="EMBL" id="BA000004">
    <property type="protein sequence ID" value="BAB04280.1"/>
    <property type="molecule type" value="Genomic_DNA"/>
</dbReference>
<dbReference type="EMBL" id="D55630">
    <property type="protein sequence ID" value="BAA09493.1"/>
    <property type="molecule type" value="Genomic_DNA"/>
</dbReference>
<dbReference type="PIR" id="A83720">
    <property type="entry name" value="A83720"/>
</dbReference>
<dbReference type="PIR" id="PC4238">
    <property type="entry name" value="PC4238"/>
</dbReference>
<dbReference type="RefSeq" id="WP_010896738.1">
    <property type="nucleotide sequence ID" value="NC_002570.2"/>
</dbReference>
<dbReference type="SMR" id="O50304"/>
<dbReference type="STRING" id="272558.gene:10726430"/>
<dbReference type="GeneID" id="87596133"/>
<dbReference type="KEGG" id="bha:BH0561"/>
<dbReference type="eggNOG" id="COG0234">
    <property type="taxonomic scope" value="Bacteria"/>
</dbReference>
<dbReference type="HOGENOM" id="CLU_132825_2_0_9"/>
<dbReference type="OrthoDB" id="9806791at2"/>
<dbReference type="Proteomes" id="UP000001258">
    <property type="component" value="Chromosome"/>
</dbReference>
<dbReference type="GO" id="GO:0005737">
    <property type="term" value="C:cytoplasm"/>
    <property type="evidence" value="ECO:0007669"/>
    <property type="project" value="UniProtKB-SubCell"/>
</dbReference>
<dbReference type="GO" id="GO:0005524">
    <property type="term" value="F:ATP binding"/>
    <property type="evidence" value="ECO:0007669"/>
    <property type="project" value="InterPro"/>
</dbReference>
<dbReference type="GO" id="GO:0046872">
    <property type="term" value="F:metal ion binding"/>
    <property type="evidence" value="ECO:0007669"/>
    <property type="project" value="TreeGrafter"/>
</dbReference>
<dbReference type="GO" id="GO:0044183">
    <property type="term" value="F:protein folding chaperone"/>
    <property type="evidence" value="ECO:0007669"/>
    <property type="project" value="InterPro"/>
</dbReference>
<dbReference type="GO" id="GO:0051087">
    <property type="term" value="F:protein-folding chaperone binding"/>
    <property type="evidence" value="ECO:0007669"/>
    <property type="project" value="TreeGrafter"/>
</dbReference>
<dbReference type="GO" id="GO:0051082">
    <property type="term" value="F:unfolded protein binding"/>
    <property type="evidence" value="ECO:0007669"/>
    <property type="project" value="TreeGrafter"/>
</dbReference>
<dbReference type="GO" id="GO:0051085">
    <property type="term" value="P:chaperone cofactor-dependent protein refolding"/>
    <property type="evidence" value="ECO:0007669"/>
    <property type="project" value="TreeGrafter"/>
</dbReference>
<dbReference type="CDD" id="cd00320">
    <property type="entry name" value="cpn10"/>
    <property type="match status" value="1"/>
</dbReference>
<dbReference type="FunFam" id="2.30.33.40:FF:000001">
    <property type="entry name" value="10 kDa chaperonin"/>
    <property type="match status" value="1"/>
</dbReference>
<dbReference type="Gene3D" id="2.30.33.40">
    <property type="entry name" value="GroES chaperonin"/>
    <property type="match status" value="1"/>
</dbReference>
<dbReference type="HAMAP" id="MF_00580">
    <property type="entry name" value="CH10"/>
    <property type="match status" value="1"/>
</dbReference>
<dbReference type="InterPro" id="IPR020818">
    <property type="entry name" value="Chaperonin_GroES"/>
</dbReference>
<dbReference type="InterPro" id="IPR037124">
    <property type="entry name" value="Chaperonin_GroES_sf"/>
</dbReference>
<dbReference type="InterPro" id="IPR018369">
    <property type="entry name" value="Chaprnonin_Cpn10_CS"/>
</dbReference>
<dbReference type="InterPro" id="IPR011032">
    <property type="entry name" value="GroES-like_sf"/>
</dbReference>
<dbReference type="NCBIfam" id="NF001527">
    <property type="entry name" value="PRK00364.1-2"/>
    <property type="match status" value="1"/>
</dbReference>
<dbReference type="NCBIfam" id="NF001530">
    <property type="entry name" value="PRK00364.1-6"/>
    <property type="match status" value="1"/>
</dbReference>
<dbReference type="NCBIfam" id="NF001531">
    <property type="entry name" value="PRK00364.2-2"/>
    <property type="match status" value="1"/>
</dbReference>
<dbReference type="NCBIfam" id="NF001532">
    <property type="entry name" value="PRK00364.2-3"/>
    <property type="match status" value="1"/>
</dbReference>
<dbReference type="NCBIfam" id="NF001533">
    <property type="entry name" value="PRK00364.2-4"/>
    <property type="match status" value="1"/>
</dbReference>
<dbReference type="NCBIfam" id="NF001534">
    <property type="entry name" value="PRK00364.2-5"/>
    <property type="match status" value="1"/>
</dbReference>
<dbReference type="PANTHER" id="PTHR10772">
    <property type="entry name" value="10 KDA HEAT SHOCK PROTEIN"/>
    <property type="match status" value="1"/>
</dbReference>
<dbReference type="PANTHER" id="PTHR10772:SF58">
    <property type="entry name" value="CO-CHAPERONIN GROES"/>
    <property type="match status" value="1"/>
</dbReference>
<dbReference type="Pfam" id="PF00166">
    <property type="entry name" value="Cpn10"/>
    <property type="match status" value="1"/>
</dbReference>
<dbReference type="PRINTS" id="PR00297">
    <property type="entry name" value="CHAPERONIN10"/>
</dbReference>
<dbReference type="SMART" id="SM00883">
    <property type="entry name" value="Cpn10"/>
    <property type="match status" value="1"/>
</dbReference>
<dbReference type="SUPFAM" id="SSF50129">
    <property type="entry name" value="GroES-like"/>
    <property type="match status" value="1"/>
</dbReference>
<dbReference type="PROSITE" id="PS00681">
    <property type="entry name" value="CHAPERONINS_CPN10"/>
    <property type="match status" value="1"/>
</dbReference>